<gene>
    <name evidence="1" type="primary">hfq</name>
    <name type="synonym">brg</name>
    <name type="ordered locus">ECA3934</name>
</gene>
<protein>
    <recommendedName>
        <fullName evidence="1">RNA-binding protein Hfq</fullName>
    </recommendedName>
</protein>
<sequence>MAKGQSLQDPFLNALRRERVPVSIYLVNGIKLQGQIESFDQFVILLKNTVSQMVYKHAISTVVPSRPVSHHSNNPGGSNNYHGSNTTAQQQSQDADDAE</sequence>
<organism>
    <name type="scientific">Pectobacterium atrosepticum (strain SCRI 1043 / ATCC BAA-672)</name>
    <name type="common">Erwinia carotovora subsp. atroseptica</name>
    <dbReference type="NCBI Taxonomy" id="218491"/>
    <lineage>
        <taxon>Bacteria</taxon>
        <taxon>Pseudomonadati</taxon>
        <taxon>Pseudomonadota</taxon>
        <taxon>Gammaproteobacteria</taxon>
        <taxon>Enterobacterales</taxon>
        <taxon>Pectobacteriaceae</taxon>
        <taxon>Pectobacterium</taxon>
    </lineage>
</organism>
<reference key="1">
    <citation type="journal article" date="2004" name="Proc. Natl. Acad. Sci. U.S.A.">
        <title>Genome sequence of the enterobacterial phytopathogen Erwinia carotovora subsp. atroseptica and characterization of virulence factors.</title>
        <authorList>
            <person name="Bell K.S."/>
            <person name="Sebaihia M."/>
            <person name="Pritchard L."/>
            <person name="Holden M.T.G."/>
            <person name="Hyman L.J."/>
            <person name="Holeva M.C."/>
            <person name="Thomson N.R."/>
            <person name="Bentley S.D."/>
            <person name="Churcher L.J.C."/>
            <person name="Mungall K."/>
            <person name="Atkin R."/>
            <person name="Bason N."/>
            <person name="Brooks K."/>
            <person name="Chillingworth T."/>
            <person name="Clark K."/>
            <person name="Doggett J."/>
            <person name="Fraser A."/>
            <person name="Hance Z."/>
            <person name="Hauser H."/>
            <person name="Jagels K."/>
            <person name="Moule S."/>
            <person name="Norbertczak H."/>
            <person name="Ormond D."/>
            <person name="Price C."/>
            <person name="Quail M.A."/>
            <person name="Sanders M."/>
            <person name="Walker D."/>
            <person name="Whitehead S."/>
            <person name="Salmond G.P.C."/>
            <person name="Birch P.R.J."/>
            <person name="Parkhill J."/>
            <person name="Toth I.K."/>
        </authorList>
    </citation>
    <scope>NUCLEOTIDE SEQUENCE [LARGE SCALE GENOMIC DNA]</scope>
    <source>
        <strain>SCRI 1043 / ATCC BAA-672</strain>
    </source>
</reference>
<name>HFQ_PECAS</name>
<accession>Q6D067</accession>
<dbReference type="EMBL" id="BX950851">
    <property type="protein sequence ID" value="CAG76831.1"/>
    <property type="molecule type" value="Genomic_DNA"/>
</dbReference>
<dbReference type="RefSeq" id="WP_005973057.1">
    <property type="nucleotide sequence ID" value="NC_004547.2"/>
</dbReference>
<dbReference type="SMR" id="Q6D067"/>
<dbReference type="STRING" id="218491.ECA3934"/>
<dbReference type="GeneID" id="57210548"/>
<dbReference type="KEGG" id="eca:ECA3934"/>
<dbReference type="eggNOG" id="COG1923">
    <property type="taxonomic scope" value="Bacteria"/>
</dbReference>
<dbReference type="HOGENOM" id="CLU_113688_2_1_6"/>
<dbReference type="OrthoDB" id="9799751at2"/>
<dbReference type="Proteomes" id="UP000007966">
    <property type="component" value="Chromosome"/>
</dbReference>
<dbReference type="GO" id="GO:0005829">
    <property type="term" value="C:cytosol"/>
    <property type="evidence" value="ECO:0007669"/>
    <property type="project" value="TreeGrafter"/>
</dbReference>
<dbReference type="GO" id="GO:0003723">
    <property type="term" value="F:RNA binding"/>
    <property type="evidence" value="ECO:0007669"/>
    <property type="project" value="UniProtKB-UniRule"/>
</dbReference>
<dbReference type="GO" id="GO:0006355">
    <property type="term" value="P:regulation of DNA-templated transcription"/>
    <property type="evidence" value="ECO:0007669"/>
    <property type="project" value="InterPro"/>
</dbReference>
<dbReference type="GO" id="GO:0043487">
    <property type="term" value="P:regulation of RNA stability"/>
    <property type="evidence" value="ECO:0007669"/>
    <property type="project" value="TreeGrafter"/>
</dbReference>
<dbReference type="GO" id="GO:0045974">
    <property type="term" value="P:regulation of translation, ncRNA-mediated"/>
    <property type="evidence" value="ECO:0007669"/>
    <property type="project" value="TreeGrafter"/>
</dbReference>
<dbReference type="CDD" id="cd01716">
    <property type="entry name" value="Hfq"/>
    <property type="match status" value="1"/>
</dbReference>
<dbReference type="FunFam" id="2.30.30.100:FF:000001">
    <property type="entry name" value="RNA-binding protein Hfq"/>
    <property type="match status" value="1"/>
</dbReference>
<dbReference type="Gene3D" id="2.30.30.100">
    <property type="match status" value="1"/>
</dbReference>
<dbReference type="HAMAP" id="MF_00436">
    <property type="entry name" value="Hfq"/>
    <property type="match status" value="1"/>
</dbReference>
<dbReference type="InterPro" id="IPR005001">
    <property type="entry name" value="Hfq"/>
</dbReference>
<dbReference type="InterPro" id="IPR010920">
    <property type="entry name" value="LSM_dom_sf"/>
</dbReference>
<dbReference type="InterPro" id="IPR047575">
    <property type="entry name" value="Sm"/>
</dbReference>
<dbReference type="NCBIfam" id="TIGR02383">
    <property type="entry name" value="Hfq"/>
    <property type="match status" value="1"/>
</dbReference>
<dbReference type="NCBIfam" id="NF001602">
    <property type="entry name" value="PRK00395.1"/>
    <property type="match status" value="1"/>
</dbReference>
<dbReference type="PANTHER" id="PTHR34772">
    <property type="entry name" value="RNA-BINDING PROTEIN HFQ"/>
    <property type="match status" value="1"/>
</dbReference>
<dbReference type="PANTHER" id="PTHR34772:SF1">
    <property type="entry name" value="RNA-BINDING PROTEIN HFQ"/>
    <property type="match status" value="1"/>
</dbReference>
<dbReference type="Pfam" id="PF17209">
    <property type="entry name" value="Hfq"/>
    <property type="match status" value="1"/>
</dbReference>
<dbReference type="SUPFAM" id="SSF50182">
    <property type="entry name" value="Sm-like ribonucleoproteins"/>
    <property type="match status" value="1"/>
</dbReference>
<dbReference type="PROSITE" id="PS52002">
    <property type="entry name" value="SM"/>
    <property type="match status" value="1"/>
</dbReference>
<keyword id="KW-1185">Reference proteome</keyword>
<keyword id="KW-0694">RNA-binding</keyword>
<keyword id="KW-0346">Stress response</keyword>
<proteinExistence type="inferred from homology"/>
<feature type="chain" id="PRO_0000095638" description="RNA-binding protein Hfq">
    <location>
        <begin position="1"/>
        <end position="99"/>
    </location>
</feature>
<feature type="domain" description="Sm" evidence="2">
    <location>
        <begin position="9"/>
        <end position="68"/>
    </location>
</feature>
<feature type="region of interest" description="Disordered" evidence="3">
    <location>
        <begin position="64"/>
        <end position="99"/>
    </location>
</feature>
<feature type="compositionally biased region" description="Low complexity" evidence="3">
    <location>
        <begin position="70"/>
        <end position="93"/>
    </location>
</feature>
<comment type="function">
    <text evidence="1">RNA chaperone that binds small regulatory RNA (sRNAs) and mRNAs to facilitate mRNA translational regulation in response to envelope stress, environmental stress and changes in metabolite concentrations. Also binds with high specificity to tRNAs.</text>
</comment>
<comment type="subunit">
    <text evidence="1">Homohexamer.</text>
</comment>
<comment type="similarity">
    <text evidence="1">Belongs to the Hfq family.</text>
</comment>
<evidence type="ECO:0000255" key="1">
    <source>
        <dbReference type="HAMAP-Rule" id="MF_00436"/>
    </source>
</evidence>
<evidence type="ECO:0000255" key="2">
    <source>
        <dbReference type="PROSITE-ProRule" id="PRU01346"/>
    </source>
</evidence>
<evidence type="ECO:0000256" key="3">
    <source>
        <dbReference type="SAM" id="MobiDB-lite"/>
    </source>
</evidence>